<sequence length="255" mass="28176">MVQKRKDLRRSDAGSAVRAKLHKASTGKAFPVGKRAPLQIRSYAWETPATATTPSGPISITDGTIFMCNTIDPGTGDDQRSRHTTMLYKMSLNVVLWPGATTAQIVGPFRVNFWLVYDAAPTGVVPKLTDIFDVAYPKWGNTWQVSRSNVHRFIVKRKWKVDYQSSGVPVGKRQSSGVEYAPVNNVVECNKFFEKLRVKTEWANTSTGAIGDVKKGALYLCANTRQMPAGDSVTTSCTTMMQGSTRLYFKVLGNQ</sequence>
<reference key="1">
    <citation type="journal article" date="1991" name="J. Gen. Virol.">
        <title>The nucleotide sequence and genome structure of the geminivirus miscanthus streak virus.</title>
        <authorList>
            <person name="Chatani M."/>
            <person name="Matsumoto Y."/>
            <person name="Mizuta H."/>
            <person name="Ikegami M."/>
            <person name="Boulton M.I."/>
            <person name="Davies J.W."/>
        </authorList>
    </citation>
    <scope>NUCLEOTIDE SEQUENCE [GENOMIC DNA]</scope>
</reference>
<dbReference type="EMBL" id="D01030">
    <property type="protein sequence ID" value="BAA00833.1"/>
    <property type="molecule type" value="Genomic_DNA"/>
</dbReference>
<dbReference type="PIR" id="JQ1357">
    <property type="entry name" value="VCCVMS"/>
</dbReference>
<dbReference type="RefSeq" id="NP_569145.1">
    <property type="nucleotide sequence ID" value="NC_003379.1"/>
</dbReference>
<dbReference type="SMR" id="P29073"/>
<dbReference type="KEGG" id="vg:932214"/>
<dbReference type="OrthoDB" id="17486at10239"/>
<dbReference type="Proteomes" id="UP000008874">
    <property type="component" value="Genome"/>
</dbReference>
<dbReference type="GO" id="GO:0043657">
    <property type="term" value="C:host cell"/>
    <property type="evidence" value="ECO:0007669"/>
    <property type="project" value="GOC"/>
</dbReference>
<dbReference type="GO" id="GO:0042025">
    <property type="term" value="C:host cell nucleus"/>
    <property type="evidence" value="ECO:0007669"/>
    <property type="project" value="UniProtKB-SubCell"/>
</dbReference>
<dbReference type="GO" id="GO:0039615">
    <property type="term" value="C:T=1 icosahedral viral capsid"/>
    <property type="evidence" value="ECO:0007669"/>
    <property type="project" value="UniProtKB-KW"/>
</dbReference>
<dbReference type="GO" id="GO:0003677">
    <property type="term" value="F:DNA binding"/>
    <property type="evidence" value="ECO:0007669"/>
    <property type="project" value="UniProtKB-KW"/>
</dbReference>
<dbReference type="GO" id="GO:0005198">
    <property type="term" value="F:structural molecule activity"/>
    <property type="evidence" value="ECO:0007669"/>
    <property type="project" value="InterPro"/>
</dbReference>
<dbReference type="GO" id="GO:0046718">
    <property type="term" value="P:symbiont entry into host cell"/>
    <property type="evidence" value="ECO:0007669"/>
    <property type="project" value="UniProtKB-KW"/>
</dbReference>
<dbReference type="GO" id="GO:0075732">
    <property type="term" value="P:viral penetration into host nucleus"/>
    <property type="evidence" value="ECO:0007669"/>
    <property type="project" value="UniProtKB-KW"/>
</dbReference>
<dbReference type="Gene3D" id="2.60.120.20">
    <property type="match status" value="1"/>
</dbReference>
<dbReference type="InterPro" id="IPR000143">
    <property type="entry name" value="Gemcoat_MSV"/>
</dbReference>
<dbReference type="InterPro" id="IPR000263">
    <property type="entry name" value="GV_A/BR1_coat"/>
</dbReference>
<dbReference type="InterPro" id="IPR029053">
    <property type="entry name" value="Viral_coat"/>
</dbReference>
<dbReference type="Pfam" id="PF00844">
    <property type="entry name" value="Gemini_coat"/>
    <property type="match status" value="1"/>
</dbReference>
<dbReference type="PRINTS" id="PR00223">
    <property type="entry name" value="GEMCOATARBR1"/>
</dbReference>
<dbReference type="PRINTS" id="PR00226">
    <property type="entry name" value="GEMCOATMSV"/>
</dbReference>
<gene>
    <name type="ORF">V1</name>
</gene>
<keyword id="KW-0167">Capsid protein</keyword>
<keyword id="KW-0238">DNA-binding</keyword>
<keyword id="KW-1048">Host nucleus</keyword>
<keyword id="KW-1185">Reference proteome</keyword>
<keyword id="KW-1140">T=1 icosahedral capsid protein</keyword>
<keyword id="KW-1163">Viral penetration into host nucleus</keyword>
<keyword id="KW-0946">Virion</keyword>
<keyword id="KW-1160">Virus entry into host cell</keyword>
<proteinExistence type="inferred from homology"/>
<organism>
    <name type="scientific">Miscanthus streak virus (isolate 91)</name>
    <name type="common">MiSV</name>
    <dbReference type="NCBI Taxonomy" id="268776"/>
    <lineage>
        <taxon>Viruses</taxon>
        <taxon>Monodnaviria</taxon>
        <taxon>Shotokuvirae</taxon>
        <taxon>Cressdnaviricota</taxon>
        <taxon>Repensiviricetes</taxon>
        <taxon>Geplafuvirales</taxon>
        <taxon>Geminiviridae</taxon>
        <taxon>Mastrevirus</taxon>
        <taxon>Miscanthus streak virus</taxon>
    </lineage>
</organism>
<evidence type="ECO:0000250" key="1"/>
<evidence type="ECO:0000305" key="2"/>
<feature type="chain" id="PRO_0000222184" description="Capsid protein">
    <location>
        <begin position="1"/>
        <end position="255"/>
    </location>
</feature>
<feature type="short sequence motif" description="Bipartite nuclear localization signal" evidence="1">
    <location>
        <begin position="1"/>
        <end position="25"/>
    </location>
</feature>
<name>CAPSD_MISV9</name>
<organismHost>
    <name type="scientific">Miscanthus sacchariflorus</name>
    <dbReference type="NCBI Taxonomy" id="183675"/>
</organismHost>
<comment type="function">
    <text evidence="1">Encapsidates the viral genome into characteristic twinned ('geminate') particles. Binds the genomic viral ssDNA and shuttles it into and out of the cell nucleus. Plays a role in protection of the genome from degradation, virus acquisition and transmission by insect vectors, infectivity, and systemic movement. The CP of monopartite geminiviruses is absolutely essential for virus movement (By similarity).</text>
</comment>
<comment type="subunit">
    <text evidence="1">Homomultimer. Interacts with the movement protein. Binds to single-stranded and double-stranded viral DNA (By similarity).</text>
</comment>
<comment type="subcellular location">
    <subcellularLocation>
        <location evidence="1">Virion</location>
    </subcellularLocation>
    <subcellularLocation>
        <location evidence="1">Host nucleus</location>
    </subcellularLocation>
    <text evidence="1">It is actively transported into the host cell nucleus. It may be exported out of the nucleus through a nuclear export signal for cell-to-cell movement and spread (By similarity).</text>
</comment>
<comment type="similarity">
    <text evidence="2">Belongs to the geminiviridae capsid protein family.</text>
</comment>
<protein>
    <recommendedName>
        <fullName>Capsid protein</fullName>
    </recommendedName>
    <alternativeName>
        <fullName>Coat protein</fullName>
        <shortName>CP</shortName>
    </alternativeName>
</protein>
<accession>P29073</accession>